<feature type="chain" id="PRO_0000052752" description="Hemoglobin subunit alpha-A">
    <location>
        <begin position="1"/>
        <end position="141"/>
    </location>
</feature>
<feature type="domain" description="Globin" evidence="1">
    <location>
        <begin position="1"/>
        <end position="141"/>
    </location>
</feature>
<feature type="binding site" evidence="1">
    <location>
        <position position="58"/>
    </location>
    <ligand>
        <name>O2</name>
        <dbReference type="ChEBI" id="CHEBI:15379"/>
    </ligand>
</feature>
<feature type="binding site" description="proximal binding residue" evidence="1">
    <location>
        <position position="87"/>
    </location>
    <ligand>
        <name>heme b</name>
        <dbReference type="ChEBI" id="CHEBI:60344"/>
    </ligand>
    <ligandPart>
        <name>Fe</name>
        <dbReference type="ChEBI" id="CHEBI:18248"/>
    </ligandPart>
</feature>
<dbReference type="PIR" id="A02305">
    <property type="entry name" value="HAEH"/>
</dbReference>
<dbReference type="SMR" id="P01982"/>
<dbReference type="GO" id="GO:0072562">
    <property type="term" value="C:blood microparticle"/>
    <property type="evidence" value="ECO:0007669"/>
    <property type="project" value="TreeGrafter"/>
</dbReference>
<dbReference type="GO" id="GO:0031838">
    <property type="term" value="C:haptoglobin-hemoglobin complex"/>
    <property type="evidence" value="ECO:0007669"/>
    <property type="project" value="TreeGrafter"/>
</dbReference>
<dbReference type="GO" id="GO:0005833">
    <property type="term" value="C:hemoglobin complex"/>
    <property type="evidence" value="ECO:0007669"/>
    <property type="project" value="InterPro"/>
</dbReference>
<dbReference type="GO" id="GO:0031720">
    <property type="term" value="F:haptoglobin binding"/>
    <property type="evidence" value="ECO:0007669"/>
    <property type="project" value="TreeGrafter"/>
</dbReference>
<dbReference type="GO" id="GO:0020037">
    <property type="term" value="F:heme binding"/>
    <property type="evidence" value="ECO:0007669"/>
    <property type="project" value="InterPro"/>
</dbReference>
<dbReference type="GO" id="GO:0005506">
    <property type="term" value="F:iron ion binding"/>
    <property type="evidence" value="ECO:0007669"/>
    <property type="project" value="InterPro"/>
</dbReference>
<dbReference type="GO" id="GO:0043177">
    <property type="term" value="F:organic acid binding"/>
    <property type="evidence" value="ECO:0007669"/>
    <property type="project" value="TreeGrafter"/>
</dbReference>
<dbReference type="GO" id="GO:0019825">
    <property type="term" value="F:oxygen binding"/>
    <property type="evidence" value="ECO:0007669"/>
    <property type="project" value="InterPro"/>
</dbReference>
<dbReference type="GO" id="GO:0005344">
    <property type="term" value="F:oxygen carrier activity"/>
    <property type="evidence" value="ECO:0007669"/>
    <property type="project" value="UniProtKB-KW"/>
</dbReference>
<dbReference type="GO" id="GO:0004601">
    <property type="term" value="F:peroxidase activity"/>
    <property type="evidence" value="ECO:0007669"/>
    <property type="project" value="TreeGrafter"/>
</dbReference>
<dbReference type="GO" id="GO:0042744">
    <property type="term" value="P:hydrogen peroxide catabolic process"/>
    <property type="evidence" value="ECO:0007669"/>
    <property type="project" value="TreeGrafter"/>
</dbReference>
<dbReference type="CDD" id="cd08927">
    <property type="entry name" value="Hb-alpha-like"/>
    <property type="match status" value="1"/>
</dbReference>
<dbReference type="FunFam" id="1.10.490.10:FF:000002">
    <property type="entry name" value="Hemoglobin subunit alpha"/>
    <property type="match status" value="1"/>
</dbReference>
<dbReference type="Gene3D" id="1.10.490.10">
    <property type="entry name" value="Globins"/>
    <property type="match status" value="1"/>
</dbReference>
<dbReference type="InterPro" id="IPR000971">
    <property type="entry name" value="Globin"/>
</dbReference>
<dbReference type="InterPro" id="IPR009050">
    <property type="entry name" value="Globin-like_sf"/>
</dbReference>
<dbReference type="InterPro" id="IPR012292">
    <property type="entry name" value="Globin/Proto"/>
</dbReference>
<dbReference type="InterPro" id="IPR002338">
    <property type="entry name" value="Hemoglobin_a-typ"/>
</dbReference>
<dbReference type="InterPro" id="IPR050056">
    <property type="entry name" value="Hemoglobin_oxygen_transport"/>
</dbReference>
<dbReference type="InterPro" id="IPR002339">
    <property type="entry name" value="Hemoglobin_pi"/>
</dbReference>
<dbReference type="PANTHER" id="PTHR11442">
    <property type="entry name" value="HEMOGLOBIN FAMILY MEMBER"/>
    <property type="match status" value="1"/>
</dbReference>
<dbReference type="PANTHER" id="PTHR11442:SF48">
    <property type="entry name" value="HEMOGLOBIN SUBUNIT ALPHA"/>
    <property type="match status" value="1"/>
</dbReference>
<dbReference type="Pfam" id="PF00042">
    <property type="entry name" value="Globin"/>
    <property type="match status" value="1"/>
</dbReference>
<dbReference type="PRINTS" id="PR00612">
    <property type="entry name" value="ALPHAHAEM"/>
</dbReference>
<dbReference type="PRINTS" id="PR00815">
    <property type="entry name" value="PIHAEM"/>
</dbReference>
<dbReference type="SUPFAM" id="SSF46458">
    <property type="entry name" value="Globin-like"/>
    <property type="match status" value="1"/>
</dbReference>
<dbReference type="PROSITE" id="PS01033">
    <property type="entry name" value="GLOBIN"/>
    <property type="match status" value="1"/>
</dbReference>
<reference key="1">
    <citation type="journal article" date="1983" name="Hoppe-Seyler's Z. Physiol. Chem.">
        <title>Primary structures of the alpha and beta chains from the major hemoglobin component of the ostrich (Struthio camelus) and American rhea (Rhea americana) (Struthioformes). Aspects of respiratory physiology and taxonomy.</title>
        <authorList>
            <person name="Oberthur W."/>
            <person name="Braunitzer G."/>
            <person name="Baumann R."/>
            <person name="Wright P.G."/>
        </authorList>
    </citation>
    <scope>PROTEIN SEQUENCE</scope>
</reference>
<name>HBA_RHEAM</name>
<sequence length="141" mass="15409">VLSGPDKTNVKNVFAKIGGHADAYGAETLERMFTTYPQTKTYFPHFDLHHGSAQIKTHGKKVVSALIDAANNIDDIYGALSKLSDLHAQKLRVDPVNFKLLGQCFLVVVAIHHPSLLTPEVHASLDKFLCAVGAVLTAKYR</sequence>
<evidence type="ECO:0000255" key="1">
    <source>
        <dbReference type="PROSITE-ProRule" id="PRU00238"/>
    </source>
</evidence>
<keyword id="KW-0903">Direct protein sequencing</keyword>
<keyword id="KW-0349">Heme</keyword>
<keyword id="KW-0408">Iron</keyword>
<keyword id="KW-0479">Metal-binding</keyword>
<keyword id="KW-0561">Oxygen transport</keyword>
<keyword id="KW-0813">Transport</keyword>
<protein>
    <recommendedName>
        <fullName>Hemoglobin subunit alpha-A</fullName>
    </recommendedName>
    <alternativeName>
        <fullName>Alpha-A-globin</fullName>
    </alternativeName>
    <alternativeName>
        <fullName>Hemoglobin alpha-A chain</fullName>
    </alternativeName>
</protein>
<proteinExistence type="evidence at protein level"/>
<gene>
    <name type="primary">HBAA</name>
</gene>
<accession>P01982</accession>
<organism>
    <name type="scientific">Rhea americana</name>
    <name type="common">Greater rhea</name>
    <name type="synonym">Common rhea</name>
    <dbReference type="NCBI Taxonomy" id="8797"/>
    <lineage>
        <taxon>Eukaryota</taxon>
        <taxon>Metazoa</taxon>
        <taxon>Chordata</taxon>
        <taxon>Craniata</taxon>
        <taxon>Vertebrata</taxon>
        <taxon>Euteleostomi</taxon>
        <taxon>Archelosauria</taxon>
        <taxon>Archosauria</taxon>
        <taxon>Dinosauria</taxon>
        <taxon>Saurischia</taxon>
        <taxon>Theropoda</taxon>
        <taxon>Coelurosauria</taxon>
        <taxon>Aves</taxon>
        <taxon>Palaeognathae</taxon>
        <taxon>Rheiformes</taxon>
        <taxon>Rheidae</taxon>
        <taxon>Rhea</taxon>
    </lineage>
</organism>
<comment type="function">
    <text>Involved in oxygen transport from the lung to the various peripheral tissues.</text>
</comment>
<comment type="subunit">
    <text>Heterotetramer of two alpha chains and two beta chains.</text>
</comment>
<comment type="tissue specificity">
    <text>Red blood cells.</text>
</comment>
<comment type="similarity">
    <text evidence="1">Belongs to the globin family.</text>
</comment>